<protein>
    <recommendedName>
        <fullName>Uncharacterized protein YfiL</fullName>
    </recommendedName>
    <alternativeName>
        <fullName>URF2</fullName>
    </alternativeName>
</protein>
<feature type="chain" id="PRO_0000169268" description="Uncharacterized protein YfiL">
    <location>
        <begin position="1"/>
        <end position="121"/>
    </location>
</feature>
<reference key="1">
    <citation type="journal article" date="1984" name="J. Mol. Biol.">
        <title>Nucleotide sequence and transcription of the phenylalanine and tyrosine operons of Escherichia coli K12.</title>
        <authorList>
            <person name="Hudson G.S."/>
            <person name="Davidson B.E."/>
        </authorList>
    </citation>
    <scope>NUCLEOTIDE SEQUENCE [GENOMIC DNA]</scope>
</reference>
<reference key="2">
    <citation type="journal article" date="1997" name="DNA Res.">
        <title>Construction of a contiguous 874-kb sequence of the Escherichia coli-K12 genome corresponding to 50.0-68.8 min on the linkage map and analysis of its sequence features.</title>
        <authorList>
            <person name="Yamamoto Y."/>
            <person name="Aiba H."/>
            <person name="Baba T."/>
            <person name="Hayashi K."/>
            <person name="Inada T."/>
            <person name="Isono K."/>
            <person name="Itoh T."/>
            <person name="Kimura S."/>
            <person name="Kitagawa M."/>
            <person name="Makino K."/>
            <person name="Miki T."/>
            <person name="Mitsuhashi N."/>
            <person name="Mizobuchi K."/>
            <person name="Mori H."/>
            <person name="Nakade S."/>
            <person name="Nakamura Y."/>
            <person name="Nashimoto H."/>
            <person name="Oshima T."/>
            <person name="Oyama S."/>
            <person name="Saito N."/>
            <person name="Sampei G."/>
            <person name="Satoh Y."/>
            <person name="Sivasundaram S."/>
            <person name="Tagami H."/>
            <person name="Takahashi H."/>
            <person name="Takeda J."/>
            <person name="Takemoto K."/>
            <person name="Uehara K."/>
            <person name="Wada C."/>
            <person name="Yamagata S."/>
            <person name="Horiuchi T."/>
        </authorList>
    </citation>
    <scope>NUCLEOTIDE SEQUENCE [LARGE SCALE GENOMIC DNA]</scope>
    <source>
        <strain>K12 / W3110 / ATCC 27325 / DSM 5911</strain>
    </source>
</reference>
<reference key="3">
    <citation type="journal article" date="1997" name="Science">
        <title>The complete genome sequence of Escherichia coli K-12.</title>
        <authorList>
            <person name="Blattner F.R."/>
            <person name="Plunkett G. III"/>
            <person name="Bloch C.A."/>
            <person name="Perna N.T."/>
            <person name="Burland V."/>
            <person name="Riley M."/>
            <person name="Collado-Vides J."/>
            <person name="Glasner J.D."/>
            <person name="Rode C.K."/>
            <person name="Mayhew G.F."/>
            <person name="Gregor J."/>
            <person name="Davis N.W."/>
            <person name="Kirkpatrick H.A."/>
            <person name="Goeden M.A."/>
            <person name="Rose D.J."/>
            <person name="Mau B."/>
            <person name="Shao Y."/>
        </authorList>
    </citation>
    <scope>NUCLEOTIDE SEQUENCE [LARGE SCALE GENOMIC DNA]</scope>
    <source>
        <strain>K12 / MG1655 / ATCC 47076</strain>
    </source>
</reference>
<reference key="4">
    <citation type="journal article" date="2006" name="Mol. Syst. Biol.">
        <title>Highly accurate genome sequences of Escherichia coli K-12 strains MG1655 and W3110.</title>
        <authorList>
            <person name="Hayashi K."/>
            <person name="Morooka N."/>
            <person name="Yamamoto Y."/>
            <person name="Fujita K."/>
            <person name="Isono K."/>
            <person name="Choi S."/>
            <person name="Ohtsubo E."/>
            <person name="Baba T."/>
            <person name="Wanner B.L."/>
            <person name="Mori H."/>
            <person name="Horiuchi T."/>
        </authorList>
    </citation>
    <scope>NUCLEOTIDE SEQUENCE [LARGE SCALE GENOMIC DNA]</scope>
    <source>
        <strain>K12 / W3110 / ATCC 27325 / DSM 5911</strain>
    </source>
</reference>
<gene>
    <name type="primary">yfiL</name>
    <name type="ordered locus">b2602</name>
    <name type="ordered locus">JW5412</name>
</gene>
<dbReference type="EMBL" id="M10431">
    <property type="status" value="NOT_ANNOTATED_CDS"/>
    <property type="molecule type" value="Genomic_DNA"/>
</dbReference>
<dbReference type="EMBL" id="U00096">
    <property type="protein sequence ID" value="AAC75651.2"/>
    <property type="molecule type" value="Genomic_DNA"/>
</dbReference>
<dbReference type="EMBL" id="AP009048">
    <property type="protein sequence ID" value="BAA16488.1"/>
    <property type="molecule type" value="Genomic_DNA"/>
</dbReference>
<dbReference type="PIR" id="E65038">
    <property type="entry name" value="QQEC89"/>
</dbReference>
<dbReference type="RefSeq" id="NP_417093.2">
    <property type="nucleotide sequence ID" value="NC_000913.3"/>
</dbReference>
<dbReference type="RefSeq" id="WP_000976004.1">
    <property type="nucleotide sequence ID" value="NZ_STEB01000040.1"/>
</dbReference>
<dbReference type="BioGRID" id="4260650">
    <property type="interactions" value="204"/>
</dbReference>
<dbReference type="FunCoup" id="P11289">
    <property type="interactions" value="56"/>
</dbReference>
<dbReference type="STRING" id="511145.b2602"/>
<dbReference type="jPOST" id="P11289"/>
<dbReference type="PaxDb" id="511145-b2602"/>
<dbReference type="EnsemblBacteria" id="AAC75651">
    <property type="protein sequence ID" value="AAC75651"/>
    <property type="gene ID" value="b2602"/>
</dbReference>
<dbReference type="GeneID" id="947106"/>
<dbReference type="KEGG" id="ecj:JW5412"/>
<dbReference type="KEGG" id="eco:b2602"/>
<dbReference type="KEGG" id="ecoc:C3026_14410"/>
<dbReference type="PATRIC" id="fig|511145.12.peg.2700"/>
<dbReference type="EchoBASE" id="EB2340"/>
<dbReference type="eggNOG" id="ENOG503372C">
    <property type="taxonomic scope" value="Bacteria"/>
</dbReference>
<dbReference type="HOGENOM" id="CLU_128661_0_0_6"/>
<dbReference type="InParanoid" id="P11289"/>
<dbReference type="OMA" id="DWYQIGY"/>
<dbReference type="OrthoDB" id="6433560at2"/>
<dbReference type="BioCyc" id="EcoCyc:EG12446-MONOMER"/>
<dbReference type="PRO" id="PR:P11289"/>
<dbReference type="Proteomes" id="UP000000625">
    <property type="component" value="Chromosome"/>
</dbReference>
<dbReference type="InterPro" id="IPR021242">
    <property type="entry name" value="DUF2799"/>
</dbReference>
<dbReference type="NCBIfam" id="NF008518">
    <property type="entry name" value="PRK11443.1"/>
    <property type="match status" value="1"/>
</dbReference>
<dbReference type="Pfam" id="PF10973">
    <property type="entry name" value="DUF2799"/>
    <property type="match status" value="1"/>
</dbReference>
<dbReference type="PROSITE" id="PS51257">
    <property type="entry name" value="PROKAR_LIPOPROTEIN"/>
    <property type="match status" value="1"/>
</dbReference>
<sequence length="121" mass="13204">MMKKFIAPLLALLVSGCQIDPYTHAPTLTSTDWYDVGMEDAISGSAIKDDDAFSDSQADRGLYLKGYAEGQKKTCQTDFTYARGLSGKSFPASCNNVENASQLHEVWQKGADENASTIRLN</sequence>
<keyword id="KW-1185">Reference proteome</keyword>
<organism>
    <name type="scientific">Escherichia coli (strain K12)</name>
    <dbReference type="NCBI Taxonomy" id="83333"/>
    <lineage>
        <taxon>Bacteria</taxon>
        <taxon>Pseudomonadati</taxon>
        <taxon>Pseudomonadota</taxon>
        <taxon>Gammaproteobacteria</taxon>
        <taxon>Enterobacterales</taxon>
        <taxon>Enterobacteriaceae</taxon>
        <taxon>Escherichia</taxon>
    </lineage>
</organism>
<accession>P11289</accession>
<accession>P76596</accession>
<accession>P77004</accession>
<proteinExistence type="predicted"/>
<name>YFIL_ECOLI</name>